<gene>
    <name evidence="1" type="primary">trpD</name>
    <name type="ordered locus">VIBHAR_02760</name>
</gene>
<accession>A7MRZ7</accession>
<dbReference type="EC" id="2.4.2.18" evidence="1"/>
<dbReference type="EMBL" id="CP000789">
    <property type="protein sequence ID" value="ABU71714.1"/>
    <property type="molecule type" value="Genomic_DNA"/>
</dbReference>
<dbReference type="RefSeq" id="WP_012128343.1">
    <property type="nucleotide sequence ID" value="NC_009783.1"/>
</dbReference>
<dbReference type="SMR" id="A7MRZ7"/>
<dbReference type="KEGG" id="vha:VIBHAR_02760"/>
<dbReference type="PATRIC" id="fig|338187.25.peg.3416"/>
<dbReference type="UniPathway" id="UPA00035">
    <property type="reaction ID" value="UER00041"/>
</dbReference>
<dbReference type="Proteomes" id="UP000008152">
    <property type="component" value="Chromosome I"/>
</dbReference>
<dbReference type="GO" id="GO:0005829">
    <property type="term" value="C:cytosol"/>
    <property type="evidence" value="ECO:0007669"/>
    <property type="project" value="TreeGrafter"/>
</dbReference>
<dbReference type="GO" id="GO:0004048">
    <property type="term" value="F:anthranilate phosphoribosyltransferase activity"/>
    <property type="evidence" value="ECO:0007669"/>
    <property type="project" value="UniProtKB-UniRule"/>
</dbReference>
<dbReference type="GO" id="GO:0000287">
    <property type="term" value="F:magnesium ion binding"/>
    <property type="evidence" value="ECO:0007669"/>
    <property type="project" value="UniProtKB-UniRule"/>
</dbReference>
<dbReference type="GO" id="GO:0000162">
    <property type="term" value="P:L-tryptophan biosynthetic process"/>
    <property type="evidence" value="ECO:0007669"/>
    <property type="project" value="UniProtKB-UniRule"/>
</dbReference>
<dbReference type="FunFam" id="1.20.970.10:FF:000003">
    <property type="entry name" value="Anthranilate phosphoribosyltransferase"/>
    <property type="match status" value="1"/>
</dbReference>
<dbReference type="FunFam" id="3.40.1030.10:FF:000002">
    <property type="entry name" value="Anthranilate phosphoribosyltransferase"/>
    <property type="match status" value="1"/>
</dbReference>
<dbReference type="Gene3D" id="3.40.1030.10">
    <property type="entry name" value="Nucleoside phosphorylase/phosphoribosyltransferase catalytic domain"/>
    <property type="match status" value="1"/>
</dbReference>
<dbReference type="Gene3D" id="1.20.970.10">
    <property type="entry name" value="Transferase, Pyrimidine Nucleoside Phosphorylase, Chain C"/>
    <property type="match status" value="1"/>
</dbReference>
<dbReference type="HAMAP" id="MF_00211">
    <property type="entry name" value="TrpD"/>
    <property type="match status" value="1"/>
</dbReference>
<dbReference type="InterPro" id="IPR005940">
    <property type="entry name" value="Anthranilate_Pribosyl_Tfrase"/>
</dbReference>
<dbReference type="InterPro" id="IPR000312">
    <property type="entry name" value="Glycosyl_Trfase_fam3"/>
</dbReference>
<dbReference type="InterPro" id="IPR017459">
    <property type="entry name" value="Glycosyl_Trfase_fam3_N_dom"/>
</dbReference>
<dbReference type="InterPro" id="IPR036320">
    <property type="entry name" value="Glycosyl_Trfase_fam3_N_dom_sf"/>
</dbReference>
<dbReference type="InterPro" id="IPR035902">
    <property type="entry name" value="Nuc_phospho_transferase"/>
</dbReference>
<dbReference type="NCBIfam" id="TIGR01245">
    <property type="entry name" value="trpD"/>
    <property type="match status" value="1"/>
</dbReference>
<dbReference type="PANTHER" id="PTHR43285">
    <property type="entry name" value="ANTHRANILATE PHOSPHORIBOSYLTRANSFERASE"/>
    <property type="match status" value="1"/>
</dbReference>
<dbReference type="PANTHER" id="PTHR43285:SF2">
    <property type="entry name" value="ANTHRANILATE PHOSPHORIBOSYLTRANSFERASE"/>
    <property type="match status" value="1"/>
</dbReference>
<dbReference type="Pfam" id="PF02885">
    <property type="entry name" value="Glycos_trans_3N"/>
    <property type="match status" value="1"/>
</dbReference>
<dbReference type="Pfam" id="PF00591">
    <property type="entry name" value="Glycos_transf_3"/>
    <property type="match status" value="1"/>
</dbReference>
<dbReference type="SUPFAM" id="SSF52418">
    <property type="entry name" value="Nucleoside phosphorylase/phosphoribosyltransferase catalytic domain"/>
    <property type="match status" value="1"/>
</dbReference>
<dbReference type="SUPFAM" id="SSF47648">
    <property type="entry name" value="Nucleoside phosphorylase/phosphoribosyltransferase N-terminal domain"/>
    <property type="match status" value="1"/>
</dbReference>
<evidence type="ECO:0000255" key="1">
    <source>
        <dbReference type="HAMAP-Rule" id="MF_00211"/>
    </source>
</evidence>
<name>TRPD_VIBC1</name>
<proteinExistence type="inferred from homology"/>
<sequence length="336" mass="35836">MEAIINPIITKLYEQESLTQEESQQLFDIIIRGELDPILMASALTALKIKGETPDEIAGAAKALLANANPFPRPDYDFADIVGTGGDGHNTINISTTAAFVAAACGLKVAKHGNRSVSSKSGSSDLLDSFGINLAMSAEDTRKAVDEIGVAFLFAPQYHGGVRHAMPVRQTMKTRTIFNILGPLINPARPNIELMGVYSEELVRPIAETMLQMSMKRAAVVHGSGLDEVAIHGETTVAEIKDGKITEYTLTPADFGLEPHPLEAIKGGVPEENKAIITNILTGKGTDAQLGAVAVNVALLMRLFGHEDLKANTQQAVEAMNSGEAYQLVQQLAAHA</sequence>
<keyword id="KW-0028">Amino-acid biosynthesis</keyword>
<keyword id="KW-0057">Aromatic amino acid biosynthesis</keyword>
<keyword id="KW-0328">Glycosyltransferase</keyword>
<keyword id="KW-0460">Magnesium</keyword>
<keyword id="KW-0479">Metal-binding</keyword>
<keyword id="KW-0808">Transferase</keyword>
<keyword id="KW-0822">Tryptophan biosynthesis</keyword>
<reference key="1">
    <citation type="submission" date="2007-08" db="EMBL/GenBank/DDBJ databases">
        <authorList>
            <consortium name="The Vibrio harveyi Genome Sequencing Project"/>
            <person name="Bassler B."/>
            <person name="Clifton S.W."/>
            <person name="Fulton L."/>
            <person name="Delehaunty K."/>
            <person name="Fronick C."/>
            <person name="Harrison M."/>
            <person name="Markivic C."/>
            <person name="Fulton R."/>
            <person name="Tin-Wollam A.-M."/>
            <person name="Shah N."/>
            <person name="Pepin K."/>
            <person name="Nash W."/>
            <person name="Thiruvilangam P."/>
            <person name="Bhonagiri V."/>
            <person name="Waters C."/>
            <person name="Tu K.C."/>
            <person name="Irgon J."/>
            <person name="Wilson R.K."/>
        </authorList>
    </citation>
    <scope>NUCLEOTIDE SEQUENCE [LARGE SCALE GENOMIC DNA]</scope>
    <source>
        <strain>ATCC BAA-1116 / BB120</strain>
    </source>
</reference>
<feature type="chain" id="PRO_0000325478" description="Anthranilate phosphoribosyltransferase">
    <location>
        <begin position="1"/>
        <end position="336"/>
    </location>
</feature>
<feature type="binding site" evidence="1">
    <location>
        <position position="83"/>
    </location>
    <ligand>
        <name>5-phospho-alpha-D-ribose 1-diphosphate</name>
        <dbReference type="ChEBI" id="CHEBI:58017"/>
    </ligand>
</feature>
<feature type="binding site" evidence="1">
    <location>
        <position position="83"/>
    </location>
    <ligand>
        <name>anthranilate</name>
        <dbReference type="ChEBI" id="CHEBI:16567"/>
        <label>1</label>
    </ligand>
</feature>
<feature type="binding site" evidence="1">
    <location>
        <begin position="86"/>
        <end position="87"/>
    </location>
    <ligand>
        <name>5-phospho-alpha-D-ribose 1-diphosphate</name>
        <dbReference type="ChEBI" id="CHEBI:58017"/>
    </ligand>
</feature>
<feature type="binding site" evidence="1">
    <location>
        <position position="91"/>
    </location>
    <ligand>
        <name>5-phospho-alpha-D-ribose 1-diphosphate</name>
        <dbReference type="ChEBI" id="CHEBI:58017"/>
    </ligand>
</feature>
<feature type="binding site" evidence="1">
    <location>
        <begin position="93"/>
        <end position="96"/>
    </location>
    <ligand>
        <name>5-phospho-alpha-D-ribose 1-diphosphate</name>
        <dbReference type="ChEBI" id="CHEBI:58017"/>
    </ligand>
</feature>
<feature type="binding site" evidence="1">
    <location>
        <position position="95"/>
    </location>
    <ligand>
        <name>Mg(2+)</name>
        <dbReference type="ChEBI" id="CHEBI:18420"/>
        <label>1</label>
    </ligand>
</feature>
<feature type="binding site" evidence="1">
    <location>
        <begin position="111"/>
        <end position="119"/>
    </location>
    <ligand>
        <name>5-phospho-alpha-D-ribose 1-diphosphate</name>
        <dbReference type="ChEBI" id="CHEBI:58017"/>
    </ligand>
</feature>
<feature type="binding site" evidence="1">
    <location>
        <position position="114"/>
    </location>
    <ligand>
        <name>anthranilate</name>
        <dbReference type="ChEBI" id="CHEBI:16567"/>
        <label>1</label>
    </ligand>
</feature>
<feature type="binding site" evidence="1">
    <location>
        <position position="123"/>
    </location>
    <ligand>
        <name>5-phospho-alpha-D-ribose 1-diphosphate</name>
        <dbReference type="ChEBI" id="CHEBI:58017"/>
    </ligand>
</feature>
<feature type="binding site" evidence="1">
    <location>
        <position position="169"/>
    </location>
    <ligand>
        <name>anthranilate</name>
        <dbReference type="ChEBI" id="CHEBI:16567"/>
        <label>2</label>
    </ligand>
</feature>
<feature type="binding site" evidence="1">
    <location>
        <position position="227"/>
    </location>
    <ligand>
        <name>Mg(2+)</name>
        <dbReference type="ChEBI" id="CHEBI:18420"/>
        <label>2</label>
    </ligand>
</feature>
<feature type="binding site" evidence="1">
    <location>
        <position position="228"/>
    </location>
    <ligand>
        <name>Mg(2+)</name>
        <dbReference type="ChEBI" id="CHEBI:18420"/>
        <label>1</label>
    </ligand>
</feature>
<feature type="binding site" evidence="1">
    <location>
        <position position="228"/>
    </location>
    <ligand>
        <name>Mg(2+)</name>
        <dbReference type="ChEBI" id="CHEBI:18420"/>
        <label>2</label>
    </ligand>
</feature>
<comment type="function">
    <text evidence="1">Catalyzes the transfer of the phosphoribosyl group of 5-phosphorylribose-1-pyrophosphate (PRPP) to anthranilate to yield N-(5'-phosphoribosyl)-anthranilate (PRA).</text>
</comment>
<comment type="catalytic activity">
    <reaction evidence="1">
        <text>N-(5-phospho-beta-D-ribosyl)anthranilate + diphosphate = 5-phospho-alpha-D-ribose 1-diphosphate + anthranilate</text>
        <dbReference type="Rhea" id="RHEA:11768"/>
        <dbReference type="ChEBI" id="CHEBI:16567"/>
        <dbReference type="ChEBI" id="CHEBI:18277"/>
        <dbReference type="ChEBI" id="CHEBI:33019"/>
        <dbReference type="ChEBI" id="CHEBI:58017"/>
        <dbReference type="EC" id="2.4.2.18"/>
    </reaction>
</comment>
<comment type="cofactor">
    <cofactor evidence="1">
        <name>Mg(2+)</name>
        <dbReference type="ChEBI" id="CHEBI:18420"/>
    </cofactor>
    <text evidence="1">Binds 2 magnesium ions per monomer.</text>
</comment>
<comment type="pathway">
    <text evidence="1">Amino-acid biosynthesis; L-tryptophan biosynthesis; L-tryptophan from chorismate: step 2/5.</text>
</comment>
<comment type="subunit">
    <text evidence="1">Homodimer.</text>
</comment>
<comment type="similarity">
    <text evidence="1">Belongs to the anthranilate phosphoribosyltransferase family.</text>
</comment>
<organism>
    <name type="scientific">Vibrio campbellii (strain ATCC BAA-1116)</name>
    <dbReference type="NCBI Taxonomy" id="2902295"/>
    <lineage>
        <taxon>Bacteria</taxon>
        <taxon>Pseudomonadati</taxon>
        <taxon>Pseudomonadota</taxon>
        <taxon>Gammaproteobacteria</taxon>
        <taxon>Vibrionales</taxon>
        <taxon>Vibrionaceae</taxon>
        <taxon>Vibrio</taxon>
    </lineage>
</organism>
<protein>
    <recommendedName>
        <fullName evidence="1">Anthranilate phosphoribosyltransferase</fullName>
        <ecNumber evidence="1">2.4.2.18</ecNumber>
    </recommendedName>
</protein>